<protein>
    <recommendedName>
        <fullName evidence="8">Diphosphoinositol polyphosphate phosphohydrolase 3-alpha</fullName>
        <shortName>DIPP-3-alpha</shortName>
        <shortName evidence="8">DIPP3-alpha</shortName>
        <shortName evidence="8">hDIPP3alpha</shortName>
        <ecNumber evidence="5 6 7">3.6.1.52</ecNumber>
    </recommendedName>
    <alternativeName>
        <fullName>Diadenosine 5',5'''-P1,P6-hexaphosphate hydrolase 3-alpha</fullName>
    </alternativeName>
    <alternativeName>
        <fullName>Diadenosine hexaphosphate hydrolase (AMP-forming)</fullName>
        <ecNumber evidence="5 6 7">3.6.1.60</ecNumber>
    </alternativeName>
    <alternativeName>
        <fullName>Nucleoside diphosphate-linked moiety X motif 10</fullName>
        <shortName>Nudix motif 10</shortName>
    </alternativeName>
    <alternativeName>
        <fullName>hAps2</fullName>
    </alternativeName>
</protein>
<evidence type="ECO:0000250" key="1"/>
<evidence type="ECO:0000250" key="2">
    <source>
        <dbReference type="UniProtKB" id="O95989"/>
    </source>
</evidence>
<evidence type="ECO:0000255" key="3">
    <source>
        <dbReference type="PROSITE-ProRule" id="PRU00794"/>
    </source>
</evidence>
<evidence type="ECO:0000256" key="4">
    <source>
        <dbReference type="SAM" id="MobiDB-lite"/>
    </source>
</evidence>
<evidence type="ECO:0000269" key="5">
    <source>
    </source>
</evidence>
<evidence type="ECO:0000269" key="6">
    <source>
    </source>
</evidence>
<evidence type="ECO:0000269" key="7">
    <source>
    </source>
</evidence>
<evidence type="ECO:0000303" key="8">
    <source>
    </source>
</evidence>
<evidence type="ECO:0000305" key="9"/>
<evidence type="ECO:0000305" key="10">
    <source>
    </source>
</evidence>
<evidence type="ECO:0007829" key="11">
    <source>
        <dbReference type="PDB" id="3MCF"/>
    </source>
</evidence>
<organism>
    <name type="scientific">Homo sapiens</name>
    <name type="common">Human</name>
    <dbReference type="NCBI Taxonomy" id="9606"/>
    <lineage>
        <taxon>Eukaryota</taxon>
        <taxon>Metazoa</taxon>
        <taxon>Chordata</taxon>
        <taxon>Craniata</taxon>
        <taxon>Vertebrata</taxon>
        <taxon>Euteleostomi</taxon>
        <taxon>Mammalia</taxon>
        <taxon>Eutheria</taxon>
        <taxon>Euarchontoglires</taxon>
        <taxon>Primates</taxon>
        <taxon>Haplorrhini</taxon>
        <taxon>Catarrhini</taxon>
        <taxon>Hominidae</taxon>
        <taxon>Homo</taxon>
    </lineage>
</organism>
<reference key="1">
    <citation type="journal article" date="2002" name="J. Biol. Chem.">
        <title>An adjacent pair of human NUDT genes on chromosome X are preferentially expressed in testis and encode two new isoforms of diphosphoinositol polyphosphate phosphohydrolase.</title>
        <authorList>
            <person name="Hidaka K."/>
            <person name="Caffrey J.J."/>
            <person name="Hua L."/>
            <person name="Zhang T."/>
            <person name="Falck J.R."/>
            <person name="Nickel G.C."/>
            <person name="Carrel L."/>
            <person name="Barnes L.D."/>
            <person name="Shears S.B."/>
        </authorList>
    </citation>
    <scope>NUCLEOTIDE SEQUENCE [MRNA]</scope>
    <scope>FUNCTION</scope>
    <scope>CATALYTIC ACTIVITY</scope>
    <scope>BIOPHYSICOCHEMICAL PROPERTIES</scope>
    <scope>TISSUE SPECIFICITY</scope>
</reference>
<reference key="2">
    <citation type="journal article" date="2004" name="Nat. Genet.">
        <title>Complete sequencing and characterization of 21,243 full-length human cDNAs.</title>
        <authorList>
            <person name="Ota T."/>
            <person name="Suzuki Y."/>
            <person name="Nishikawa T."/>
            <person name="Otsuki T."/>
            <person name="Sugiyama T."/>
            <person name="Irie R."/>
            <person name="Wakamatsu A."/>
            <person name="Hayashi K."/>
            <person name="Sato H."/>
            <person name="Nagai K."/>
            <person name="Kimura K."/>
            <person name="Makita H."/>
            <person name="Sekine M."/>
            <person name="Obayashi M."/>
            <person name="Nishi T."/>
            <person name="Shibahara T."/>
            <person name="Tanaka T."/>
            <person name="Ishii S."/>
            <person name="Yamamoto J."/>
            <person name="Saito K."/>
            <person name="Kawai Y."/>
            <person name="Isono Y."/>
            <person name="Nakamura Y."/>
            <person name="Nagahari K."/>
            <person name="Murakami K."/>
            <person name="Yasuda T."/>
            <person name="Iwayanagi T."/>
            <person name="Wagatsuma M."/>
            <person name="Shiratori A."/>
            <person name="Sudo H."/>
            <person name="Hosoiri T."/>
            <person name="Kaku Y."/>
            <person name="Kodaira H."/>
            <person name="Kondo H."/>
            <person name="Sugawara M."/>
            <person name="Takahashi M."/>
            <person name="Kanda K."/>
            <person name="Yokoi T."/>
            <person name="Furuya T."/>
            <person name="Kikkawa E."/>
            <person name="Omura Y."/>
            <person name="Abe K."/>
            <person name="Kamihara K."/>
            <person name="Katsuta N."/>
            <person name="Sato K."/>
            <person name="Tanikawa M."/>
            <person name="Yamazaki M."/>
            <person name="Ninomiya K."/>
            <person name="Ishibashi T."/>
            <person name="Yamashita H."/>
            <person name="Murakawa K."/>
            <person name="Fujimori K."/>
            <person name="Tanai H."/>
            <person name="Kimata M."/>
            <person name="Watanabe M."/>
            <person name="Hiraoka S."/>
            <person name="Chiba Y."/>
            <person name="Ishida S."/>
            <person name="Ono Y."/>
            <person name="Takiguchi S."/>
            <person name="Watanabe S."/>
            <person name="Yosida M."/>
            <person name="Hotuta T."/>
            <person name="Kusano J."/>
            <person name="Kanehori K."/>
            <person name="Takahashi-Fujii A."/>
            <person name="Hara H."/>
            <person name="Tanase T.-O."/>
            <person name="Nomura Y."/>
            <person name="Togiya S."/>
            <person name="Komai F."/>
            <person name="Hara R."/>
            <person name="Takeuchi K."/>
            <person name="Arita M."/>
            <person name="Imose N."/>
            <person name="Musashino K."/>
            <person name="Yuuki H."/>
            <person name="Oshima A."/>
            <person name="Sasaki N."/>
            <person name="Aotsuka S."/>
            <person name="Yoshikawa Y."/>
            <person name="Matsunawa H."/>
            <person name="Ichihara T."/>
            <person name="Shiohata N."/>
            <person name="Sano S."/>
            <person name="Moriya S."/>
            <person name="Momiyama H."/>
            <person name="Satoh N."/>
            <person name="Takami S."/>
            <person name="Terashima Y."/>
            <person name="Suzuki O."/>
            <person name="Nakagawa S."/>
            <person name="Senoh A."/>
            <person name="Mizoguchi H."/>
            <person name="Goto Y."/>
            <person name="Shimizu F."/>
            <person name="Wakebe H."/>
            <person name="Hishigaki H."/>
            <person name="Watanabe T."/>
            <person name="Sugiyama A."/>
            <person name="Takemoto M."/>
            <person name="Kawakami B."/>
            <person name="Yamazaki M."/>
            <person name="Watanabe K."/>
            <person name="Kumagai A."/>
            <person name="Itakura S."/>
            <person name="Fukuzumi Y."/>
            <person name="Fujimori Y."/>
            <person name="Komiyama M."/>
            <person name="Tashiro H."/>
            <person name="Tanigami A."/>
            <person name="Fujiwara T."/>
            <person name="Ono T."/>
            <person name="Yamada K."/>
            <person name="Fujii Y."/>
            <person name="Ozaki K."/>
            <person name="Hirao M."/>
            <person name="Ohmori Y."/>
            <person name="Kawabata A."/>
            <person name="Hikiji T."/>
            <person name="Kobatake N."/>
            <person name="Inagaki H."/>
            <person name="Ikema Y."/>
            <person name="Okamoto S."/>
            <person name="Okitani R."/>
            <person name="Kawakami T."/>
            <person name="Noguchi S."/>
            <person name="Itoh T."/>
            <person name="Shigeta K."/>
            <person name="Senba T."/>
            <person name="Matsumura K."/>
            <person name="Nakajima Y."/>
            <person name="Mizuno T."/>
            <person name="Morinaga M."/>
            <person name="Sasaki M."/>
            <person name="Togashi T."/>
            <person name="Oyama M."/>
            <person name="Hata H."/>
            <person name="Watanabe M."/>
            <person name="Komatsu T."/>
            <person name="Mizushima-Sugano J."/>
            <person name="Satoh T."/>
            <person name="Shirai Y."/>
            <person name="Takahashi Y."/>
            <person name="Nakagawa K."/>
            <person name="Okumura K."/>
            <person name="Nagase T."/>
            <person name="Nomura N."/>
            <person name="Kikuchi H."/>
            <person name="Masuho Y."/>
            <person name="Yamashita R."/>
            <person name="Nakai K."/>
            <person name="Yada T."/>
            <person name="Nakamura Y."/>
            <person name="Ohara O."/>
            <person name="Isogai T."/>
            <person name="Sugano S."/>
        </authorList>
    </citation>
    <scope>NUCLEOTIDE SEQUENCE [LARGE SCALE MRNA]</scope>
</reference>
<reference key="3">
    <citation type="journal article" date="2005" name="Nature">
        <title>The DNA sequence of the human X chromosome.</title>
        <authorList>
            <person name="Ross M.T."/>
            <person name="Grafham D.V."/>
            <person name="Coffey A.J."/>
            <person name="Scherer S."/>
            <person name="McLay K."/>
            <person name="Muzny D."/>
            <person name="Platzer M."/>
            <person name="Howell G.R."/>
            <person name="Burrows C."/>
            <person name="Bird C.P."/>
            <person name="Frankish A."/>
            <person name="Lovell F.L."/>
            <person name="Howe K.L."/>
            <person name="Ashurst J.L."/>
            <person name="Fulton R.S."/>
            <person name="Sudbrak R."/>
            <person name="Wen G."/>
            <person name="Jones M.C."/>
            <person name="Hurles M.E."/>
            <person name="Andrews T.D."/>
            <person name="Scott C.E."/>
            <person name="Searle S."/>
            <person name="Ramser J."/>
            <person name="Whittaker A."/>
            <person name="Deadman R."/>
            <person name="Carter N.P."/>
            <person name="Hunt S.E."/>
            <person name="Chen R."/>
            <person name="Cree A."/>
            <person name="Gunaratne P."/>
            <person name="Havlak P."/>
            <person name="Hodgson A."/>
            <person name="Metzker M.L."/>
            <person name="Richards S."/>
            <person name="Scott G."/>
            <person name="Steffen D."/>
            <person name="Sodergren E."/>
            <person name="Wheeler D.A."/>
            <person name="Worley K.C."/>
            <person name="Ainscough R."/>
            <person name="Ambrose K.D."/>
            <person name="Ansari-Lari M.A."/>
            <person name="Aradhya S."/>
            <person name="Ashwell R.I."/>
            <person name="Babbage A.K."/>
            <person name="Bagguley C.L."/>
            <person name="Ballabio A."/>
            <person name="Banerjee R."/>
            <person name="Barker G.E."/>
            <person name="Barlow K.F."/>
            <person name="Barrett I.P."/>
            <person name="Bates K.N."/>
            <person name="Beare D.M."/>
            <person name="Beasley H."/>
            <person name="Beasley O."/>
            <person name="Beck A."/>
            <person name="Bethel G."/>
            <person name="Blechschmidt K."/>
            <person name="Brady N."/>
            <person name="Bray-Allen S."/>
            <person name="Bridgeman A.M."/>
            <person name="Brown A.J."/>
            <person name="Brown M.J."/>
            <person name="Bonnin D."/>
            <person name="Bruford E.A."/>
            <person name="Buhay C."/>
            <person name="Burch P."/>
            <person name="Burford D."/>
            <person name="Burgess J."/>
            <person name="Burrill W."/>
            <person name="Burton J."/>
            <person name="Bye J.M."/>
            <person name="Carder C."/>
            <person name="Carrel L."/>
            <person name="Chako J."/>
            <person name="Chapman J.C."/>
            <person name="Chavez D."/>
            <person name="Chen E."/>
            <person name="Chen G."/>
            <person name="Chen Y."/>
            <person name="Chen Z."/>
            <person name="Chinault C."/>
            <person name="Ciccodicola A."/>
            <person name="Clark S.Y."/>
            <person name="Clarke G."/>
            <person name="Clee C.M."/>
            <person name="Clegg S."/>
            <person name="Clerc-Blankenburg K."/>
            <person name="Clifford K."/>
            <person name="Cobley V."/>
            <person name="Cole C.G."/>
            <person name="Conquer J.S."/>
            <person name="Corby N."/>
            <person name="Connor R.E."/>
            <person name="David R."/>
            <person name="Davies J."/>
            <person name="Davis C."/>
            <person name="Davis J."/>
            <person name="Delgado O."/>
            <person name="Deshazo D."/>
            <person name="Dhami P."/>
            <person name="Ding Y."/>
            <person name="Dinh H."/>
            <person name="Dodsworth S."/>
            <person name="Draper H."/>
            <person name="Dugan-Rocha S."/>
            <person name="Dunham A."/>
            <person name="Dunn M."/>
            <person name="Durbin K.J."/>
            <person name="Dutta I."/>
            <person name="Eades T."/>
            <person name="Ellwood M."/>
            <person name="Emery-Cohen A."/>
            <person name="Errington H."/>
            <person name="Evans K.L."/>
            <person name="Faulkner L."/>
            <person name="Francis F."/>
            <person name="Frankland J."/>
            <person name="Fraser A.E."/>
            <person name="Galgoczy P."/>
            <person name="Gilbert J."/>
            <person name="Gill R."/>
            <person name="Gloeckner G."/>
            <person name="Gregory S.G."/>
            <person name="Gribble S."/>
            <person name="Griffiths C."/>
            <person name="Grocock R."/>
            <person name="Gu Y."/>
            <person name="Gwilliam R."/>
            <person name="Hamilton C."/>
            <person name="Hart E.A."/>
            <person name="Hawes A."/>
            <person name="Heath P.D."/>
            <person name="Heitmann K."/>
            <person name="Hennig S."/>
            <person name="Hernandez J."/>
            <person name="Hinzmann B."/>
            <person name="Ho S."/>
            <person name="Hoffs M."/>
            <person name="Howden P.J."/>
            <person name="Huckle E.J."/>
            <person name="Hume J."/>
            <person name="Hunt P.J."/>
            <person name="Hunt A.R."/>
            <person name="Isherwood J."/>
            <person name="Jacob L."/>
            <person name="Johnson D."/>
            <person name="Jones S."/>
            <person name="de Jong P.J."/>
            <person name="Joseph S.S."/>
            <person name="Keenan S."/>
            <person name="Kelly S."/>
            <person name="Kershaw J.K."/>
            <person name="Khan Z."/>
            <person name="Kioschis P."/>
            <person name="Klages S."/>
            <person name="Knights A.J."/>
            <person name="Kosiura A."/>
            <person name="Kovar-Smith C."/>
            <person name="Laird G.K."/>
            <person name="Langford C."/>
            <person name="Lawlor S."/>
            <person name="Leversha M."/>
            <person name="Lewis L."/>
            <person name="Liu W."/>
            <person name="Lloyd C."/>
            <person name="Lloyd D.M."/>
            <person name="Loulseged H."/>
            <person name="Loveland J.E."/>
            <person name="Lovell J.D."/>
            <person name="Lozado R."/>
            <person name="Lu J."/>
            <person name="Lyne R."/>
            <person name="Ma J."/>
            <person name="Maheshwari M."/>
            <person name="Matthews L.H."/>
            <person name="McDowall J."/>
            <person name="McLaren S."/>
            <person name="McMurray A."/>
            <person name="Meidl P."/>
            <person name="Meitinger T."/>
            <person name="Milne S."/>
            <person name="Miner G."/>
            <person name="Mistry S.L."/>
            <person name="Morgan M."/>
            <person name="Morris S."/>
            <person name="Mueller I."/>
            <person name="Mullikin J.C."/>
            <person name="Nguyen N."/>
            <person name="Nordsiek G."/>
            <person name="Nyakatura G."/>
            <person name="O'dell C.N."/>
            <person name="Okwuonu G."/>
            <person name="Palmer S."/>
            <person name="Pandian R."/>
            <person name="Parker D."/>
            <person name="Parrish J."/>
            <person name="Pasternak S."/>
            <person name="Patel D."/>
            <person name="Pearce A.V."/>
            <person name="Pearson D.M."/>
            <person name="Pelan S.E."/>
            <person name="Perez L."/>
            <person name="Porter K.M."/>
            <person name="Ramsey Y."/>
            <person name="Reichwald K."/>
            <person name="Rhodes S."/>
            <person name="Ridler K.A."/>
            <person name="Schlessinger D."/>
            <person name="Schueler M.G."/>
            <person name="Sehra H.K."/>
            <person name="Shaw-Smith C."/>
            <person name="Shen H."/>
            <person name="Sheridan E.M."/>
            <person name="Shownkeen R."/>
            <person name="Skuce C.D."/>
            <person name="Smith M.L."/>
            <person name="Sotheran E.C."/>
            <person name="Steingruber H.E."/>
            <person name="Steward C.A."/>
            <person name="Storey R."/>
            <person name="Swann R.M."/>
            <person name="Swarbreck D."/>
            <person name="Tabor P.E."/>
            <person name="Taudien S."/>
            <person name="Taylor T."/>
            <person name="Teague B."/>
            <person name="Thomas K."/>
            <person name="Thorpe A."/>
            <person name="Timms K."/>
            <person name="Tracey A."/>
            <person name="Trevanion S."/>
            <person name="Tromans A.C."/>
            <person name="d'Urso M."/>
            <person name="Verduzco D."/>
            <person name="Villasana D."/>
            <person name="Waldron L."/>
            <person name="Wall M."/>
            <person name="Wang Q."/>
            <person name="Warren J."/>
            <person name="Warry G.L."/>
            <person name="Wei X."/>
            <person name="West A."/>
            <person name="Whitehead S.L."/>
            <person name="Whiteley M.N."/>
            <person name="Wilkinson J.E."/>
            <person name="Willey D.L."/>
            <person name="Williams G."/>
            <person name="Williams L."/>
            <person name="Williamson A."/>
            <person name="Williamson H."/>
            <person name="Wilming L."/>
            <person name="Woodmansey R.L."/>
            <person name="Wray P.W."/>
            <person name="Yen J."/>
            <person name="Zhang J."/>
            <person name="Zhou J."/>
            <person name="Zoghbi H."/>
            <person name="Zorilla S."/>
            <person name="Buck D."/>
            <person name="Reinhardt R."/>
            <person name="Poustka A."/>
            <person name="Rosenthal A."/>
            <person name="Lehrach H."/>
            <person name="Meindl A."/>
            <person name="Minx P.J."/>
            <person name="Hillier L.W."/>
            <person name="Willard H.F."/>
            <person name="Wilson R.K."/>
            <person name="Waterston R.H."/>
            <person name="Rice C.M."/>
            <person name="Vaudin M."/>
            <person name="Coulson A."/>
            <person name="Nelson D.L."/>
            <person name="Weinstock G."/>
            <person name="Sulston J.E."/>
            <person name="Durbin R.M."/>
            <person name="Hubbard T."/>
            <person name="Gibbs R.A."/>
            <person name="Beck S."/>
            <person name="Rogers J."/>
            <person name="Bentley D.R."/>
        </authorList>
    </citation>
    <scope>NUCLEOTIDE SEQUENCE [LARGE SCALE GENOMIC DNA]</scope>
</reference>
<reference key="4">
    <citation type="submission" date="2005-09" db="EMBL/GenBank/DDBJ databases">
        <authorList>
            <person name="Mural R.J."/>
            <person name="Istrail S."/>
            <person name="Sutton G.G."/>
            <person name="Florea L."/>
            <person name="Halpern A.L."/>
            <person name="Mobarry C.M."/>
            <person name="Lippert R."/>
            <person name="Walenz B."/>
            <person name="Shatkay H."/>
            <person name="Dew I."/>
            <person name="Miller J.R."/>
            <person name="Flanigan M.J."/>
            <person name="Edwards N.J."/>
            <person name="Bolanos R."/>
            <person name="Fasulo D."/>
            <person name="Halldorsson B.V."/>
            <person name="Hannenhalli S."/>
            <person name="Turner R."/>
            <person name="Yooseph S."/>
            <person name="Lu F."/>
            <person name="Nusskern D.R."/>
            <person name="Shue B.C."/>
            <person name="Zheng X.H."/>
            <person name="Zhong F."/>
            <person name="Delcher A.L."/>
            <person name="Huson D.H."/>
            <person name="Kravitz S.A."/>
            <person name="Mouchard L."/>
            <person name="Reinert K."/>
            <person name="Remington K.A."/>
            <person name="Clark A.G."/>
            <person name="Waterman M.S."/>
            <person name="Eichler E.E."/>
            <person name="Adams M.D."/>
            <person name="Hunkapiller M.W."/>
            <person name="Myers E.W."/>
            <person name="Venter J.C."/>
        </authorList>
    </citation>
    <scope>NUCLEOTIDE SEQUENCE [LARGE SCALE GENOMIC DNA]</scope>
</reference>
<reference key="5">
    <citation type="journal article" date="2004" name="Genome Res.">
        <title>The status, quality, and expansion of the NIH full-length cDNA project: the Mammalian Gene Collection (MGC).</title>
        <authorList>
            <consortium name="The MGC Project Team"/>
        </authorList>
    </citation>
    <scope>NUCLEOTIDE SEQUENCE [LARGE SCALE MRNA]</scope>
    <source>
        <tissue>Ovary</tissue>
    </source>
</reference>
<reference key="6">
    <citation type="journal article" date="2002" name="BMC Biochem.">
        <title>Cloning and characterisation of hAps1 and hAps2, human diadenosine polyphosphate-metabolising Nudix hydrolases.</title>
        <authorList>
            <person name="Leslie N.R."/>
            <person name="McLennan A.G."/>
            <person name="Safrany S.T."/>
        </authorList>
    </citation>
    <scope>CATALYTIC ACTIVITY</scope>
    <scope>SUBCELLULAR LOCATION</scope>
    <scope>COFACTOR</scope>
    <scope>BIOPHYSICOCHEMICAL PROPERTIES</scope>
    <scope>TISSUE SPECIFICITY</scope>
</reference>
<reference key="7">
    <citation type="journal article" date="2002" name="J. Biol. Chem.">
        <title>Nudix hydrolases that degrade dinucleoside and diphosphoinositol polyphosphates also have 5-phosphoribosyl 1-pyrophosphate (PRPP) pyrophosphatase activity that generates the glycolytic activator ribose 1,5-bisphosphate.</title>
        <authorList>
            <person name="Fisher D.I."/>
            <person name="Safrany S.T."/>
            <person name="Strike P."/>
            <person name="McLennan A.G."/>
            <person name="Cartwright J.L."/>
        </authorList>
    </citation>
    <scope>CATALYTIC ACTIVITY</scope>
</reference>
<reference key="8">
    <citation type="journal article" date="2011" name="BMC Syst. Biol.">
        <title>Initial characterization of the human central proteome.</title>
        <authorList>
            <person name="Burkard T.R."/>
            <person name="Planyavsky M."/>
            <person name="Kaupe I."/>
            <person name="Breitwieser F.P."/>
            <person name="Buerckstuemmer T."/>
            <person name="Bennett K.L."/>
            <person name="Superti-Furga G."/>
            <person name="Colinge J."/>
        </authorList>
    </citation>
    <scope>IDENTIFICATION BY MASS SPECTROMETRY [LARGE SCALE ANALYSIS]</scope>
</reference>
<reference key="9">
    <citation type="submission" date="2010-04" db="PDB data bank">
        <title>Crystal structure of human diphosphoinositol polyphosphate phosphohydrolase 3-alpha.</title>
        <authorList>
            <consortium name="Structural genomics consortium (SGC)"/>
        </authorList>
    </citation>
    <scope>X-RAY CRYSTALLOGRAPHY (2.0 ANGSTROMS) OF 17-144 IN COMPLEX WITH CITRATE</scope>
</reference>
<name>NUD10_HUMAN</name>
<proteinExistence type="evidence at protein level"/>
<feature type="chain" id="PRO_0000057062" description="Diphosphoinositol polyphosphate phosphohydrolase 3-alpha">
    <location>
        <begin position="1"/>
        <end position="164"/>
    </location>
</feature>
<feature type="domain" description="Nudix hydrolase" evidence="3">
    <location>
        <begin position="17"/>
        <end position="144"/>
    </location>
</feature>
<feature type="region of interest" description="Disordered" evidence="4">
    <location>
        <begin position="144"/>
        <end position="164"/>
    </location>
</feature>
<feature type="short sequence motif" description="Nudix box">
    <location>
        <begin position="50"/>
        <end position="71"/>
    </location>
</feature>
<feature type="compositionally biased region" description="Polar residues" evidence="4">
    <location>
        <begin position="148"/>
        <end position="164"/>
    </location>
</feature>
<feature type="active site" description="Proton acceptor" evidence="1">
    <location>
        <position position="68"/>
    </location>
</feature>
<feature type="binding site" evidence="2">
    <location>
        <position position="9"/>
    </location>
    <ligand>
        <name>substrate</name>
    </ligand>
</feature>
<feature type="binding site" evidence="2">
    <location>
        <begin position="17"/>
        <end position="19"/>
    </location>
    <ligand>
        <name>substrate</name>
    </ligand>
</feature>
<feature type="binding site" evidence="2">
    <location>
        <begin position="38"/>
        <end position="40"/>
    </location>
    <ligand>
        <name>substrate</name>
    </ligand>
</feature>
<feature type="binding site" evidence="2">
    <location>
        <position position="49"/>
    </location>
    <ligand>
        <name>Mg(2+)</name>
        <dbReference type="ChEBI" id="CHEBI:18420"/>
        <label>1</label>
    </ligand>
</feature>
<feature type="binding site" evidence="2">
    <location>
        <position position="65"/>
    </location>
    <ligand>
        <name>Mg(2+)</name>
        <dbReference type="ChEBI" id="CHEBI:18420"/>
        <label>2</label>
    </ligand>
</feature>
<feature type="binding site" evidence="2">
    <location>
        <position position="65"/>
    </location>
    <ligand>
        <name>Mg(2+)</name>
        <dbReference type="ChEBI" id="CHEBI:18420"/>
        <label>3</label>
    </ligand>
</feature>
<feature type="binding site" evidence="2">
    <location>
        <position position="69"/>
    </location>
    <ligand>
        <name>Mg(2+)</name>
        <dbReference type="ChEBI" id="CHEBI:18420"/>
        <label>1</label>
    </ligand>
</feature>
<feature type="binding site" evidence="2">
    <location>
        <begin position="89"/>
        <end position="91"/>
    </location>
    <ligand>
        <name>substrate</name>
    </ligand>
</feature>
<feature type="binding site" evidence="2">
    <location>
        <position position="115"/>
    </location>
    <ligand>
        <name>substrate</name>
    </ligand>
</feature>
<feature type="binding site" evidence="2">
    <location>
        <position position="133"/>
    </location>
    <ligand>
        <name>substrate</name>
    </ligand>
</feature>
<feature type="sequence conflict" description="In Ref. 5; AAH50700." evidence="9" ref="5">
    <original>K</original>
    <variation>E</variation>
    <location>
        <position position="90"/>
    </location>
</feature>
<feature type="sequence conflict" description="In Ref. 5; AAH49383." evidence="9" ref="5">
    <original>V</original>
    <variation>M</variation>
    <location>
        <position position="135"/>
    </location>
</feature>
<feature type="strand" evidence="11">
    <location>
        <begin position="18"/>
        <end position="27"/>
    </location>
</feature>
<feature type="strand" evidence="11">
    <location>
        <begin position="32"/>
        <end position="37"/>
    </location>
</feature>
<feature type="strand" evidence="11">
    <location>
        <begin position="39"/>
        <end position="41"/>
    </location>
</feature>
<feature type="strand" evidence="11">
    <location>
        <begin position="44"/>
        <end position="46"/>
    </location>
</feature>
<feature type="strand" evidence="11">
    <location>
        <begin position="49"/>
        <end position="51"/>
    </location>
</feature>
<feature type="helix" evidence="11">
    <location>
        <begin position="58"/>
        <end position="70"/>
    </location>
</feature>
<feature type="strand" evidence="11">
    <location>
        <begin position="72"/>
        <end position="83"/>
    </location>
</feature>
<feature type="strand" evidence="11">
    <location>
        <begin position="92"/>
        <end position="103"/>
    </location>
</feature>
<feature type="helix" evidence="11">
    <location>
        <begin position="108"/>
        <end position="113"/>
    </location>
</feature>
<feature type="strand" evidence="11">
    <location>
        <begin position="117"/>
        <end position="121"/>
    </location>
</feature>
<feature type="helix" evidence="11">
    <location>
        <begin position="122"/>
        <end position="130"/>
    </location>
</feature>
<feature type="helix" evidence="11">
    <location>
        <begin position="134"/>
        <end position="144"/>
    </location>
</feature>
<sequence length="164" mass="18500">MKCKPNQTRTYDPEGFKKRAACLCFRSEREDEVLLVSSSRYPDRWIVPGGGMEPEEEPGGAAVREVYEEAGVKGKLGRLLGVFEQNQDPKHRTYVYVLTVTELLEDWEDSVSIGRKREWFKVEDAIKVLQCHKPVHAEYLEKLKLGGSPTNGNSMAPSSPDSDP</sequence>
<keyword id="KW-0002">3D-structure</keyword>
<keyword id="KW-0963">Cytoplasm</keyword>
<keyword id="KW-0378">Hydrolase</keyword>
<keyword id="KW-0460">Magnesium</keyword>
<keyword id="KW-0464">Manganese</keyword>
<keyword id="KW-0479">Metal-binding</keyword>
<keyword id="KW-1267">Proteomics identification</keyword>
<keyword id="KW-1185">Reference proteome</keyword>
<gene>
    <name type="primary">NUDT10</name>
    <name type="synonym">APS2</name>
    <name type="synonym">DIPP3A</name>
</gene>
<comment type="function">
    <text evidence="5">Cleaves a beta-phosphate from the diphosphate groups in PP-InsP5 (diphosphoinositol pentakisphosphate), suggesting that it may play a role in signal transduction. Also able to catalyze the hydrolysis of dinucleoside oligophosphates, with Ap6A and Ap5A being the preferred substrates. The major reaction products are ADP and p4a from Ap6A and ADP and ATP from Ap5A. Also able to hydrolyze 5-phosphoribose 1-diphosphate.</text>
</comment>
<comment type="catalytic activity">
    <reaction evidence="5 6 7">
        <text>diphospho-myo-inositol polyphosphate + H2O = myo-inositol polyphosphate + phosphate.</text>
        <dbReference type="EC" id="3.6.1.52"/>
    </reaction>
</comment>
<comment type="catalytic activity">
    <reaction evidence="5 6 7">
        <text>P(1),P(6)-bis(5'-adenosyl) hexaphosphate + H2O = adenosine 5'-pentaphosphate + AMP + 2 H(+)</text>
        <dbReference type="Rhea" id="RHEA:32047"/>
        <dbReference type="ChEBI" id="CHEBI:15377"/>
        <dbReference type="ChEBI" id="CHEBI:15378"/>
        <dbReference type="ChEBI" id="CHEBI:63740"/>
        <dbReference type="ChEBI" id="CHEBI:63813"/>
        <dbReference type="ChEBI" id="CHEBI:456215"/>
        <dbReference type="EC" id="3.6.1.60"/>
    </reaction>
</comment>
<comment type="catalytic activity">
    <reaction evidence="5 6 7">
        <text>P(1),P(5)-bis(5'-adenosyl) pentaphosphate + H2O = adenosine 5'-tetraphosphate + AMP + 2 H(+)</text>
        <dbReference type="Rhea" id="RHEA:32051"/>
        <dbReference type="ChEBI" id="CHEBI:15377"/>
        <dbReference type="ChEBI" id="CHEBI:15378"/>
        <dbReference type="ChEBI" id="CHEBI:58450"/>
        <dbReference type="ChEBI" id="CHEBI:62041"/>
        <dbReference type="ChEBI" id="CHEBI:456215"/>
        <dbReference type="EC" id="3.6.1.60"/>
    </reaction>
</comment>
<comment type="cofactor">
    <cofactor evidence="1 6">
        <name>Mg(2+)</name>
        <dbReference type="ChEBI" id="CHEBI:18420"/>
    </cofactor>
    <cofactor evidence="1 6">
        <name>Mn(2+)</name>
        <dbReference type="ChEBI" id="CHEBI:29035"/>
    </cofactor>
    <text evidence="1 6">Binds 3 Mg(2+) or Mn(2+) ions per subunit. Mn(2+) may be the true cofactor in vivo.</text>
</comment>
<comment type="biophysicochemical properties">
    <kinetics>
        <KM evidence="5 6">0.088 uM for PP-InsP5</KM>
        <KM evidence="5 6">19 uM for Ap6A</KM>
        <KM evidence="5 6">50 uM for Ap5A</KM>
    </kinetics>
    <phDependence>
        <text evidence="5 6">Optimum pH is 8.5.</text>
    </phDependence>
</comment>
<comment type="interaction">
    <interactant intactId="EBI-726826">
        <id>Q8NFP7</id>
    </interactant>
    <interactant intactId="EBI-7116203">
        <id>O75031</id>
        <label>HSF2BP</label>
    </interactant>
    <organismsDiffer>false</organismsDiffer>
    <experiments>3</experiments>
</comment>
<comment type="interaction">
    <interactant intactId="EBI-726826">
        <id>Q8NFP7</id>
    </interactant>
    <interactant intactId="EBI-742948">
        <id>Q5JR59</id>
        <label>MTUS2</label>
    </interactant>
    <organismsDiffer>false</organismsDiffer>
    <experiments>3</experiments>
</comment>
<comment type="interaction">
    <interactant intactId="EBI-726826">
        <id>Q8NFP7</id>
    </interactant>
    <interactant intactId="EBI-54454959">
        <id>A0A024RBG1</id>
        <label>NUDT4B</label>
    </interactant>
    <organismsDiffer>false</organismsDiffer>
    <experiments>2</experiments>
</comment>
<comment type="interaction">
    <interactant intactId="EBI-726826">
        <id>Q8NFP7</id>
    </interactant>
    <interactant intactId="EBI-350517">
        <id>Q9NR12</id>
        <label>PDLIM7</label>
    </interactant>
    <organismsDiffer>false</organismsDiffer>
    <experiments>3</experiments>
</comment>
<comment type="interaction">
    <interactant intactId="EBI-726826">
        <id>Q8NFP7</id>
    </interactant>
    <interactant intactId="EBI-10829018">
        <id>Q04864-2</id>
        <label>REL</label>
    </interactant>
    <organismsDiffer>false</organismsDiffer>
    <experiments>3</experiments>
</comment>
<comment type="interaction">
    <interactant intactId="EBI-726826">
        <id>Q8NFP7</id>
    </interactant>
    <interactant intactId="EBI-749483">
        <id>O75971</id>
        <label>SNAPC5</label>
    </interactant>
    <organismsDiffer>false</organismsDiffer>
    <experiments>3</experiments>
</comment>
<comment type="interaction">
    <interactant intactId="EBI-726826">
        <id>Q8NFP7</id>
    </interactant>
    <interactant intactId="EBI-533224">
        <id>P15884</id>
        <label>TCF4</label>
    </interactant>
    <organismsDiffer>false</organismsDiffer>
    <experiments>3</experiments>
</comment>
<comment type="interaction">
    <interactant intactId="EBI-726826">
        <id>Q8NFP7</id>
    </interactant>
    <interactant intactId="EBI-2340370">
        <id>Q9BZR9</id>
        <label>TRIM8</label>
    </interactant>
    <organismsDiffer>false</organismsDiffer>
    <experiments>3</experiments>
</comment>
<comment type="subcellular location">
    <subcellularLocation>
        <location evidence="10">Cytoplasm</location>
    </subcellularLocation>
</comment>
<comment type="tissue specificity">
    <text evidence="5 6">Mainly expressed in testis and, at lower level in brain. According to PubMed:12121577, it is widely expressed.</text>
</comment>
<comment type="similarity">
    <text evidence="9">Belongs to the Nudix hydrolase family. DIPP subfamily.</text>
</comment>
<dbReference type="EC" id="3.6.1.52" evidence="5 6 7"/>
<dbReference type="EC" id="3.6.1.60" evidence="5 6 7"/>
<dbReference type="EMBL" id="AF469196">
    <property type="protein sequence ID" value="AAM64113.1"/>
    <property type="molecule type" value="mRNA"/>
</dbReference>
<dbReference type="EMBL" id="AK291952">
    <property type="protein sequence ID" value="BAF84641.1"/>
    <property type="molecule type" value="mRNA"/>
</dbReference>
<dbReference type="EMBL" id="AL158055">
    <property type="status" value="NOT_ANNOTATED_CDS"/>
    <property type="molecule type" value="Genomic_DNA"/>
</dbReference>
<dbReference type="EMBL" id="CH471180">
    <property type="protein sequence ID" value="EAW89910.1"/>
    <property type="molecule type" value="Genomic_DNA"/>
</dbReference>
<dbReference type="EMBL" id="CH471180">
    <property type="protein sequence ID" value="EAW89911.1"/>
    <property type="molecule type" value="Genomic_DNA"/>
</dbReference>
<dbReference type="EMBL" id="BC049383">
    <property type="protein sequence ID" value="AAH49383.1"/>
    <property type="molecule type" value="mRNA"/>
</dbReference>
<dbReference type="EMBL" id="BC050700">
    <property type="protein sequence ID" value="AAH50700.1"/>
    <property type="molecule type" value="mRNA"/>
</dbReference>
<dbReference type="CCDS" id="CCDS35278.1"/>
<dbReference type="RefSeq" id="NP_001291892.1">
    <property type="nucleotide sequence ID" value="NM_001304963.2"/>
</dbReference>
<dbReference type="RefSeq" id="NP_694853.1">
    <property type="nucleotide sequence ID" value="NM_153183.4"/>
</dbReference>
<dbReference type="PDB" id="3MCF">
    <property type="method" value="X-ray"/>
    <property type="resolution" value="2.00 A"/>
    <property type="chains" value="A/B=17-144"/>
</dbReference>
<dbReference type="PDBsum" id="3MCF"/>
<dbReference type="SMR" id="Q8NFP7"/>
<dbReference type="BioGRID" id="128079">
    <property type="interactions" value="21"/>
</dbReference>
<dbReference type="FunCoup" id="Q8NFP7">
    <property type="interactions" value="1276"/>
</dbReference>
<dbReference type="IntAct" id="Q8NFP7">
    <property type="interactions" value="14"/>
</dbReference>
<dbReference type="STRING" id="9606.ENSP00000365174"/>
<dbReference type="ChEMBL" id="CHEMBL4295904"/>
<dbReference type="iPTMnet" id="Q8NFP7"/>
<dbReference type="PhosphoSitePlus" id="Q8NFP7"/>
<dbReference type="BioMuta" id="NUDT10"/>
<dbReference type="DMDM" id="68565913"/>
<dbReference type="jPOST" id="Q8NFP7"/>
<dbReference type="MassIVE" id="Q8NFP7"/>
<dbReference type="PaxDb" id="9606-ENSP00000365174"/>
<dbReference type="PeptideAtlas" id="Q8NFP7"/>
<dbReference type="ProteomicsDB" id="73332"/>
<dbReference type="Pumba" id="Q8NFP7"/>
<dbReference type="Antibodypedia" id="26316">
    <property type="antibodies" value="204 antibodies from 23 providers"/>
</dbReference>
<dbReference type="DNASU" id="170685"/>
<dbReference type="Ensembl" id="ENST00000356450.3">
    <property type="protein sequence ID" value="ENSP00000348831.2"/>
    <property type="gene ID" value="ENSG00000122824.11"/>
</dbReference>
<dbReference type="Ensembl" id="ENST00000376006.7">
    <property type="protein sequence ID" value="ENSP00000365174.3"/>
    <property type="gene ID" value="ENSG00000122824.11"/>
</dbReference>
<dbReference type="GeneID" id="170685"/>
<dbReference type="KEGG" id="hsa:170685"/>
<dbReference type="MANE-Select" id="ENST00000356450.3">
    <property type="protein sequence ID" value="ENSP00000348831.2"/>
    <property type="RefSeq nucleotide sequence ID" value="NM_001304963.2"/>
    <property type="RefSeq protein sequence ID" value="NP_001291892.1"/>
</dbReference>
<dbReference type="UCSC" id="uc004dph.3">
    <property type="organism name" value="human"/>
</dbReference>
<dbReference type="AGR" id="HGNC:17621"/>
<dbReference type="CTD" id="170685"/>
<dbReference type="DisGeNET" id="170685"/>
<dbReference type="GeneCards" id="NUDT10"/>
<dbReference type="HGNC" id="HGNC:17621">
    <property type="gene designation" value="NUDT10"/>
</dbReference>
<dbReference type="HPA" id="ENSG00000122824">
    <property type="expression patterns" value="Tissue enhanced (ovary, testis)"/>
</dbReference>
<dbReference type="MIM" id="300527">
    <property type="type" value="gene"/>
</dbReference>
<dbReference type="neXtProt" id="NX_Q8NFP7"/>
<dbReference type="OpenTargets" id="ENSG00000122824"/>
<dbReference type="PharmGKB" id="PA31831"/>
<dbReference type="VEuPathDB" id="HostDB:ENSG00000122824"/>
<dbReference type="eggNOG" id="KOG2839">
    <property type="taxonomic scope" value="Eukaryota"/>
</dbReference>
<dbReference type="GeneTree" id="ENSGT01040000240679"/>
<dbReference type="HOGENOM" id="CLU_037162_1_0_1"/>
<dbReference type="InParanoid" id="Q8NFP7"/>
<dbReference type="OMA" id="KCEVESH"/>
<dbReference type="OrthoDB" id="2011998at2759"/>
<dbReference type="PAN-GO" id="Q8NFP7">
    <property type="GO annotations" value="11 GO annotations based on evolutionary models"/>
</dbReference>
<dbReference type="PhylomeDB" id="Q8NFP7"/>
<dbReference type="TreeFam" id="TF106349"/>
<dbReference type="BioCyc" id="MetaCyc:HS04604-MONOMER"/>
<dbReference type="BRENDA" id="3.6.1.60">
    <property type="organism ID" value="2681"/>
</dbReference>
<dbReference type="PathwayCommons" id="Q8NFP7"/>
<dbReference type="Reactome" id="R-HSA-1855167">
    <property type="pathway name" value="Synthesis of pyrophosphates in the cytosol"/>
</dbReference>
<dbReference type="SignaLink" id="Q8NFP7"/>
<dbReference type="BioGRID-ORCS" id="170685">
    <property type="hits" value="20 hits in 665 CRISPR screens"/>
</dbReference>
<dbReference type="ChiTaRS" id="NUDT10">
    <property type="organism name" value="human"/>
</dbReference>
<dbReference type="EvolutionaryTrace" id="Q8NFP7"/>
<dbReference type="GenomeRNAi" id="170685"/>
<dbReference type="Pharos" id="Q8NFP7">
    <property type="development level" value="Tbio"/>
</dbReference>
<dbReference type="PRO" id="PR:Q8NFP7"/>
<dbReference type="Proteomes" id="UP000005640">
    <property type="component" value="Chromosome X"/>
</dbReference>
<dbReference type="RNAct" id="Q8NFP7">
    <property type="molecule type" value="protein"/>
</dbReference>
<dbReference type="Bgee" id="ENSG00000122824">
    <property type="expression patterns" value="Expressed in cortical plate and 123 other cell types or tissues"/>
</dbReference>
<dbReference type="GO" id="GO:0005737">
    <property type="term" value="C:cytoplasm"/>
    <property type="evidence" value="ECO:0000318"/>
    <property type="project" value="GO_Central"/>
</dbReference>
<dbReference type="GO" id="GO:0005829">
    <property type="term" value="C:cytosol"/>
    <property type="evidence" value="ECO:0000314"/>
    <property type="project" value="HPA"/>
</dbReference>
<dbReference type="GO" id="GO:0005634">
    <property type="term" value="C:nucleus"/>
    <property type="evidence" value="ECO:0000318"/>
    <property type="project" value="GO_Central"/>
</dbReference>
<dbReference type="GO" id="GO:0034431">
    <property type="term" value="F:bis(5'-adenosyl)-hexaphosphatase activity"/>
    <property type="evidence" value="ECO:0000318"/>
    <property type="project" value="GO_Central"/>
</dbReference>
<dbReference type="GO" id="GO:0034432">
    <property type="term" value="F:bis(5'-adenosyl)-pentaphosphatase activity"/>
    <property type="evidence" value="ECO:0000318"/>
    <property type="project" value="GO_Central"/>
</dbReference>
<dbReference type="GO" id="GO:0008486">
    <property type="term" value="F:diphosphoinositol-polyphosphate diphosphatase activity"/>
    <property type="evidence" value="ECO:0000250"/>
    <property type="project" value="UniProtKB"/>
</dbReference>
<dbReference type="GO" id="GO:0000298">
    <property type="term" value="F:endopolyphosphatase activity"/>
    <property type="evidence" value="ECO:0000318"/>
    <property type="project" value="GO_Central"/>
</dbReference>
<dbReference type="GO" id="GO:0046872">
    <property type="term" value="F:metal ion binding"/>
    <property type="evidence" value="ECO:0007669"/>
    <property type="project" value="UniProtKB-KW"/>
</dbReference>
<dbReference type="GO" id="GO:1901911">
    <property type="term" value="P:adenosine 5'-(hexahydrogen pentaphosphate) catabolic process"/>
    <property type="evidence" value="ECO:0000318"/>
    <property type="project" value="GO_Central"/>
</dbReference>
<dbReference type="GO" id="GO:1901909">
    <property type="term" value="P:diadenosine hexaphosphate catabolic process"/>
    <property type="evidence" value="ECO:0000318"/>
    <property type="project" value="GO_Central"/>
</dbReference>
<dbReference type="GO" id="GO:1901907">
    <property type="term" value="P:diadenosine pentaphosphate catabolic process"/>
    <property type="evidence" value="ECO:0000318"/>
    <property type="project" value="GO_Central"/>
</dbReference>
<dbReference type="GO" id="GO:0071543">
    <property type="term" value="P:diphosphoinositol polyphosphate metabolic process"/>
    <property type="evidence" value="ECO:0000318"/>
    <property type="project" value="GO_Central"/>
</dbReference>
<dbReference type="CDD" id="cd04666">
    <property type="entry name" value="NUDIX_DIPP2_like_Nudt4"/>
    <property type="match status" value="1"/>
</dbReference>
<dbReference type="FunFam" id="3.90.79.10:FF:000002">
    <property type="entry name" value="diphosphoinositol polyphosphate phosphohydrolase 1"/>
    <property type="match status" value="1"/>
</dbReference>
<dbReference type="Gene3D" id="3.90.79.10">
    <property type="entry name" value="Nucleoside Triphosphate Pyrophosphohydrolase"/>
    <property type="match status" value="1"/>
</dbReference>
<dbReference type="InterPro" id="IPR047198">
    <property type="entry name" value="DDP-like_NUDIX"/>
</dbReference>
<dbReference type="InterPro" id="IPR015797">
    <property type="entry name" value="NUDIX_hydrolase-like_dom_sf"/>
</dbReference>
<dbReference type="InterPro" id="IPR020084">
    <property type="entry name" value="NUDIX_hydrolase_CS"/>
</dbReference>
<dbReference type="InterPro" id="IPR000086">
    <property type="entry name" value="NUDIX_hydrolase_dom"/>
</dbReference>
<dbReference type="PANTHER" id="PTHR12629">
    <property type="entry name" value="DIPHOSPHOINOSITOL POLYPHOSPHATE PHOSPHOHYDROLASE"/>
    <property type="match status" value="1"/>
</dbReference>
<dbReference type="PANTHER" id="PTHR12629:SF43">
    <property type="entry name" value="DIPHOSPHOINOSITOL POLYPHOSPHATE PHOSPHOHYDROLASE 3-ALPHA"/>
    <property type="match status" value="1"/>
</dbReference>
<dbReference type="Pfam" id="PF00293">
    <property type="entry name" value="NUDIX"/>
    <property type="match status" value="1"/>
</dbReference>
<dbReference type="SUPFAM" id="SSF55811">
    <property type="entry name" value="Nudix"/>
    <property type="match status" value="1"/>
</dbReference>
<dbReference type="PROSITE" id="PS51462">
    <property type="entry name" value="NUDIX"/>
    <property type="match status" value="1"/>
</dbReference>
<dbReference type="PROSITE" id="PS00893">
    <property type="entry name" value="NUDIX_BOX"/>
    <property type="match status" value="1"/>
</dbReference>
<accession>Q8NFP7</accession>
<accession>A8K7D7</accession>
<accession>D3DX69</accession>
<accession>Q86VK1</accession>
<accession>Q86VR0</accession>